<feature type="chain" id="PRO_0000346346" description="Methylenetetrahydrofolate--tRNA-(uracil-5-)-methyltransferase TrmFO">
    <location>
        <begin position="1"/>
        <end position="439"/>
    </location>
</feature>
<feature type="binding site" evidence="1">
    <location>
        <begin position="8"/>
        <end position="13"/>
    </location>
    <ligand>
        <name>FAD</name>
        <dbReference type="ChEBI" id="CHEBI:57692"/>
    </ligand>
</feature>
<comment type="function">
    <text evidence="1">Catalyzes the folate-dependent formation of 5-methyl-uridine at position 54 (M-5-U54) in all tRNAs.</text>
</comment>
<comment type="catalytic activity">
    <reaction evidence="1">
        <text>uridine(54) in tRNA + (6R)-5,10-methylene-5,6,7,8-tetrahydrofolate + NADH + H(+) = 5-methyluridine(54) in tRNA + (6S)-5,6,7,8-tetrahydrofolate + NAD(+)</text>
        <dbReference type="Rhea" id="RHEA:16873"/>
        <dbReference type="Rhea" id="RHEA-COMP:10167"/>
        <dbReference type="Rhea" id="RHEA-COMP:10193"/>
        <dbReference type="ChEBI" id="CHEBI:15378"/>
        <dbReference type="ChEBI" id="CHEBI:15636"/>
        <dbReference type="ChEBI" id="CHEBI:57453"/>
        <dbReference type="ChEBI" id="CHEBI:57540"/>
        <dbReference type="ChEBI" id="CHEBI:57945"/>
        <dbReference type="ChEBI" id="CHEBI:65315"/>
        <dbReference type="ChEBI" id="CHEBI:74447"/>
        <dbReference type="EC" id="2.1.1.74"/>
    </reaction>
</comment>
<comment type="catalytic activity">
    <reaction evidence="1">
        <text>uridine(54) in tRNA + (6R)-5,10-methylene-5,6,7,8-tetrahydrofolate + NADPH + H(+) = 5-methyluridine(54) in tRNA + (6S)-5,6,7,8-tetrahydrofolate + NADP(+)</text>
        <dbReference type="Rhea" id="RHEA:62372"/>
        <dbReference type="Rhea" id="RHEA-COMP:10167"/>
        <dbReference type="Rhea" id="RHEA-COMP:10193"/>
        <dbReference type="ChEBI" id="CHEBI:15378"/>
        <dbReference type="ChEBI" id="CHEBI:15636"/>
        <dbReference type="ChEBI" id="CHEBI:57453"/>
        <dbReference type="ChEBI" id="CHEBI:57783"/>
        <dbReference type="ChEBI" id="CHEBI:58349"/>
        <dbReference type="ChEBI" id="CHEBI:65315"/>
        <dbReference type="ChEBI" id="CHEBI:74447"/>
        <dbReference type="EC" id="2.1.1.74"/>
    </reaction>
</comment>
<comment type="cofactor">
    <cofactor evidence="1">
        <name>FAD</name>
        <dbReference type="ChEBI" id="CHEBI:57692"/>
    </cofactor>
</comment>
<comment type="subcellular location">
    <subcellularLocation>
        <location evidence="1">Cytoplasm</location>
    </subcellularLocation>
</comment>
<comment type="similarity">
    <text evidence="1">Belongs to the MnmG family. TrmFO subfamily.</text>
</comment>
<accession>Q039E2</accession>
<evidence type="ECO:0000255" key="1">
    <source>
        <dbReference type="HAMAP-Rule" id="MF_01037"/>
    </source>
</evidence>
<name>TRMFO_LACP3</name>
<proteinExistence type="inferred from homology"/>
<dbReference type="EC" id="2.1.1.74" evidence="1"/>
<dbReference type="EMBL" id="CP000423">
    <property type="protein sequence ID" value="ABJ70180.1"/>
    <property type="molecule type" value="Genomic_DNA"/>
</dbReference>
<dbReference type="RefSeq" id="WP_011674495.1">
    <property type="nucleotide sequence ID" value="NC_008526.1"/>
</dbReference>
<dbReference type="RefSeq" id="YP_806622.1">
    <property type="nucleotide sequence ID" value="NC_008526.1"/>
</dbReference>
<dbReference type="SMR" id="Q039E2"/>
<dbReference type="STRING" id="321967.LSEI_1402"/>
<dbReference type="PaxDb" id="321967-LSEI_1402"/>
<dbReference type="DNASU" id="4419743"/>
<dbReference type="KEGG" id="lca:LSEI_1402"/>
<dbReference type="PATRIC" id="fig|321967.11.peg.1380"/>
<dbReference type="HOGENOM" id="CLU_033057_1_0_9"/>
<dbReference type="Proteomes" id="UP000001651">
    <property type="component" value="Chromosome"/>
</dbReference>
<dbReference type="GO" id="GO:0005829">
    <property type="term" value="C:cytosol"/>
    <property type="evidence" value="ECO:0007669"/>
    <property type="project" value="TreeGrafter"/>
</dbReference>
<dbReference type="GO" id="GO:0050660">
    <property type="term" value="F:flavin adenine dinucleotide binding"/>
    <property type="evidence" value="ECO:0007669"/>
    <property type="project" value="UniProtKB-UniRule"/>
</dbReference>
<dbReference type="GO" id="GO:0047151">
    <property type="term" value="F:tRNA (uracil(54)-C5)-methyltransferase activity, 5,10-methylenetetrahydrofolate-dependent"/>
    <property type="evidence" value="ECO:0007669"/>
    <property type="project" value="UniProtKB-UniRule"/>
</dbReference>
<dbReference type="GO" id="GO:0030488">
    <property type="term" value="P:tRNA methylation"/>
    <property type="evidence" value="ECO:0007669"/>
    <property type="project" value="TreeGrafter"/>
</dbReference>
<dbReference type="GO" id="GO:0002098">
    <property type="term" value="P:tRNA wobble uridine modification"/>
    <property type="evidence" value="ECO:0007669"/>
    <property type="project" value="TreeGrafter"/>
</dbReference>
<dbReference type="FunFam" id="3.50.50.60:FF:000035">
    <property type="entry name" value="Methylenetetrahydrofolate--tRNA-(uracil-5-)-methyltransferase TrmFO"/>
    <property type="match status" value="1"/>
</dbReference>
<dbReference type="Gene3D" id="3.50.50.60">
    <property type="entry name" value="FAD/NAD(P)-binding domain"/>
    <property type="match status" value="2"/>
</dbReference>
<dbReference type="HAMAP" id="MF_01037">
    <property type="entry name" value="TrmFO"/>
    <property type="match status" value="1"/>
</dbReference>
<dbReference type="InterPro" id="IPR036188">
    <property type="entry name" value="FAD/NAD-bd_sf"/>
</dbReference>
<dbReference type="InterPro" id="IPR002218">
    <property type="entry name" value="MnmG-rel"/>
</dbReference>
<dbReference type="InterPro" id="IPR020595">
    <property type="entry name" value="MnmG-rel_CS"/>
</dbReference>
<dbReference type="InterPro" id="IPR040131">
    <property type="entry name" value="MnmG_N"/>
</dbReference>
<dbReference type="InterPro" id="IPR004417">
    <property type="entry name" value="TrmFO"/>
</dbReference>
<dbReference type="NCBIfam" id="TIGR00137">
    <property type="entry name" value="gid_trmFO"/>
    <property type="match status" value="1"/>
</dbReference>
<dbReference type="NCBIfam" id="NF003739">
    <property type="entry name" value="PRK05335.1"/>
    <property type="match status" value="1"/>
</dbReference>
<dbReference type="PANTHER" id="PTHR11806">
    <property type="entry name" value="GLUCOSE INHIBITED DIVISION PROTEIN A"/>
    <property type="match status" value="1"/>
</dbReference>
<dbReference type="PANTHER" id="PTHR11806:SF2">
    <property type="entry name" value="METHYLENETETRAHYDROFOLATE--TRNA-(URACIL-5-)-METHYLTRANSFERASE TRMFO"/>
    <property type="match status" value="1"/>
</dbReference>
<dbReference type="Pfam" id="PF01134">
    <property type="entry name" value="GIDA"/>
    <property type="match status" value="1"/>
</dbReference>
<dbReference type="SUPFAM" id="SSF51905">
    <property type="entry name" value="FAD/NAD(P)-binding domain"/>
    <property type="match status" value="1"/>
</dbReference>
<dbReference type="PROSITE" id="PS01281">
    <property type="entry name" value="GIDA_2"/>
    <property type="match status" value="1"/>
</dbReference>
<organism>
    <name type="scientific">Lacticaseibacillus paracasei (strain ATCC 334 / BCRC 17002 / CCUG 31169 / CIP 107868 / KCTC 3260 / NRRL B-441)</name>
    <name type="common">Lactobacillus paracasei</name>
    <dbReference type="NCBI Taxonomy" id="321967"/>
    <lineage>
        <taxon>Bacteria</taxon>
        <taxon>Bacillati</taxon>
        <taxon>Bacillota</taxon>
        <taxon>Bacilli</taxon>
        <taxon>Lactobacillales</taxon>
        <taxon>Lactobacillaceae</taxon>
        <taxon>Lacticaseibacillus</taxon>
    </lineage>
</organism>
<keyword id="KW-0963">Cytoplasm</keyword>
<keyword id="KW-0274">FAD</keyword>
<keyword id="KW-0285">Flavoprotein</keyword>
<keyword id="KW-0489">Methyltransferase</keyword>
<keyword id="KW-0520">NAD</keyword>
<keyword id="KW-0521">NADP</keyword>
<keyword id="KW-1185">Reference proteome</keyword>
<keyword id="KW-0808">Transferase</keyword>
<keyword id="KW-0819">tRNA processing</keyword>
<gene>
    <name evidence="1" type="primary">trmFO</name>
    <name type="ordered locus">LSEI_1402</name>
</gene>
<reference key="1">
    <citation type="journal article" date="2006" name="Proc. Natl. Acad. Sci. U.S.A.">
        <title>Comparative genomics of the lactic acid bacteria.</title>
        <authorList>
            <person name="Makarova K.S."/>
            <person name="Slesarev A."/>
            <person name="Wolf Y.I."/>
            <person name="Sorokin A."/>
            <person name="Mirkin B."/>
            <person name="Koonin E.V."/>
            <person name="Pavlov A."/>
            <person name="Pavlova N."/>
            <person name="Karamychev V."/>
            <person name="Polouchine N."/>
            <person name="Shakhova V."/>
            <person name="Grigoriev I."/>
            <person name="Lou Y."/>
            <person name="Rohksar D."/>
            <person name="Lucas S."/>
            <person name="Huang K."/>
            <person name="Goodstein D.M."/>
            <person name="Hawkins T."/>
            <person name="Plengvidhya V."/>
            <person name="Welker D."/>
            <person name="Hughes J."/>
            <person name="Goh Y."/>
            <person name="Benson A."/>
            <person name="Baldwin K."/>
            <person name="Lee J.-H."/>
            <person name="Diaz-Muniz I."/>
            <person name="Dosti B."/>
            <person name="Smeianov V."/>
            <person name="Wechter W."/>
            <person name="Barabote R."/>
            <person name="Lorca G."/>
            <person name="Altermann E."/>
            <person name="Barrangou R."/>
            <person name="Ganesan B."/>
            <person name="Xie Y."/>
            <person name="Rawsthorne H."/>
            <person name="Tamir D."/>
            <person name="Parker C."/>
            <person name="Breidt F."/>
            <person name="Broadbent J.R."/>
            <person name="Hutkins R."/>
            <person name="O'Sullivan D."/>
            <person name="Steele J."/>
            <person name="Unlu G."/>
            <person name="Saier M.H. Jr."/>
            <person name="Klaenhammer T."/>
            <person name="Richardson P."/>
            <person name="Kozyavkin S."/>
            <person name="Weimer B.C."/>
            <person name="Mills D.A."/>
        </authorList>
    </citation>
    <scope>NUCLEOTIDE SEQUENCE [LARGE SCALE GENOMIC DNA]</scope>
    <source>
        <strain>ATCC 334 / BCRC 17002 / CCUG 31169 / CIP 107868 / KCTC 3260 / NRRL B-441</strain>
    </source>
</reference>
<protein>
    <recommendedName>
        <fullName evidence="1">Methylenetetrahydrofolate--tRNA-(uracil-5-)-methyltransferase TrmFO</fullName>
        <ecNumber evidence="1">2.1.1.74</ecNumber>
    </recommendedName>
    <alternativeName>
        <fullName evidence="1">Folate-dependent tRNA (uracil-5-)-methyltransferase</fullName>
    </alternativeName>
    <alternativeName>
        <fullName evidence="1">Folate-dependent tRNA(M-5-U54)-methyltransferase</fullName>
    </alternativeName>
</protein>
<sequence length="439" mass="47850">MPTVNVIGAGLAGSEAAWQIAQAGVDVNLYEMRPVKMTPAHHTSNFAELVCTNSLRANQITNAVGLLKEEMRQLHSIIIQSADATAVPAGGALAVDREPFSELVTQKLTSNSHIHVVNEELSAFPDGITVVATGPLTAPGLAQAIVDLNGEAGLSFFDAAAPILDANTINEDIVYKKSRYDRGEAAYLNCPMTKDEFLAFYQALVSAEVAEGHDFEKMTVFEGCMPIEVMAKRGIKTMLFGPLKPVGLEDPRTGKEPYAVVQLRQDNAAASLYNMVGFQTHLKWGEQKRVFRLIPGLENVQIVRYGVMHRNTFMKSPVVLEPTYASKRRPDLFFAGQMTGVEGYVESAASGLIAGINATRMALGETPVIFPETTAMGSMAHYITHTSAHHFQPMNANFGIMPALTVKIRNKKERNQQLADRALKDLATFQAGMNRVEQV</sequence>